<feature type="chain" id="PRO_1000201846" description="Holliday junction branch migration complex subunit RuvB">
    <location>
        <begin position="1"/>
        <end position="342"/>
    </location>
</feature>
<feature type="region of interest" description="Large ATPase domain (RuvB-L)" evidence="1">
    <location>
        <begin position="1"/>
        <end position="179"/>
    </location>
</feature>
<feature type="region of interest" description="Small ATPAse domain (RuvB-S)" evidence="1">
    <location>
        <begin position="180"/>
        <end position="250"/>
    </location>
</feature>
<feature type="region of interest" description="Head domain (RuvB-H)" evidence="1">
    <location>
        <begin position="253"/>
        <end position="342"/>
    </location>
</feature>
<feature type="binding site" evidence="1">
    <location>
        <position position="18"/>
    </location>
    <ligand>
        <name>ATP</name>
        <dbReference type="ChEBI" id="CHEBI:30616"/>
    </ligand>
</feature>
<feature type="binding site" evidence="1">
    <location>
        <position position="19"/>
    </location>
    <ligand>
        <name>ATP</name>
        <dbReference type="ChEBI" id="CHEBI:30616"/>
    </ligand>
</feature>
<feature type="binding site" evidence="1">
    <location>
        <position position="60"/>
    </location>
    <ligand>
        <name>ATP</name>
        <dbReference type="ChEBI" id="CHEBI:30616"/>
    </ligand>
</feature>
<feature type="binding site" evidence="1">
    <location>
        <position position="63"/>
    </location>
    <ligand>
        <name>ATP</name>
        <dbReference type="ChEBI" id="CHEBI:30616"/>
    </ligand>
</feature>
<feature type="binding site" evidence="1">
    <location>
        <position position="64"/>
    </location>
    <ligand>
        <name>ATP</name>
        <dbReference type="ChEBI" id="CHEBI:30616"/>
    </ligand>
</feature>
<feature type="binding site" evidence="1">
    <location>
        <position position="64"/>
    </location>
    <ligand>
        <name>Mg(2+)</name>
        <dbReference type="ChEBI" id="CHEBI:18420"/>
    </ligand>
</feature>
<feature type="binding site" evidence="1">
    <location>
        <position position="65"/>
    </location>
    <ligand>
        <name>ATP</name>
        <dbReference type="ChEBI" id="CHEBI:30616"/>
    </ligand>
</feature>
<feature type="binding site" evidence="1">
    <location>
        <begin position="126"/>
        <end position="128"/>
    </location>
    <ligand>
        <name>ATP</name>
        <dbReference type="ChEBI" id="CHEBI:30616"/>
    </ligand>
</feature>
<feature type="binding site" evidence="1">
    <location>
        <position position="169"/>
    </location>
    <ligand>
        <name>ATP</name>
        <dbReference type="ChEBI" id="CHEBI:30616"/>
    </ligand>
</feature>
<feature type="binding site" evidence="1">
    <location>
        <position position="179"/>
    </location>
    <ligand>
        <name>ATP</name>
        <dbReference type="ChEBI" id="CHEBI:30616"/>
    </ligand>
</feature>
<feature type="binding site" evidence="1">
    <location>
        <position position="216"/>
    </location>
    <ligand>
        <name>ATP</name>
        <dbReference type="ChEBI" id="CHEBI:30616"/>
    </ligand>
</feature>
<feature type="binding site" evidence="1">
    <location>
        <position position="289"/>
    </location>
    <ligand>
        <name>DNA</name>
        <dbReference type="ChEBI" id="CHEBI:16991"/>
    </ligand>
</feature>
<feature type="binding site" evidence="1">
    <location>
        <position position="308"/>
    </location>
    <ligand>
        <name>DNA</name>
        <dbReference type="ChEBI" id="CHEBI:16991"/>
    </ligand>
</feature>
<feature type="binding site" evidence="1">
    <location>
        <position position="313"/>
    </location>
    <ligand>
        <name>DNA</name>
        <dbReference type="ChEBI" id="CHEBI:16991"/>
    </ligand>
</feature>
<comment type="function">
    <text evidence="1">The RuvA-RuvB-RuvC complex processes Holliday junction (HJ) DNA during genetic recombination and DNA repair, while the RuvA-RuvB complex plays an important role in the rescue of blocked DNA replication forks via replication fork reversal (RFR). RuvA specifically binds to HJ cruciform DNA, conferring on it an open structure. The RuvB hexamer acts as an ATP-dependent pump, pulling dsDNA into and through the RuvAB complex. RuvB forms 2 homohexamers on either side of HJ DNA bound by 1 or 2 RuvA tetramers; 4 subunits per hexamer contact DNA at a time. Coordinated motions by a converter formed by DNA-disengaged RuvB subunits stimulates ATP hydrolysis and nucleotide exchange. Immobilization of the converter enables RuvB to convert the ATP-contained energy into a lever motion, pulling 2 nucleotides of DNA out of the RuvA tetramer per ATP hydrolyzed, thus driving DNA branch migration. The RuvB motors rotate together with the DNA substrate, which together with the progressing nucleotide cycle form the mechanistic basis for DNA recombination by continuous HJ branch migration. Branch migration allows RuvC to scan DNA until it finds its consensus sequence, where it cleaves and resolves cruciform DNA.</text>
</comment>
<comment type="catalytic activity">
    <reaction evidence="1">
        <text>ATP + H2O = ADP + phosphate + H(+)</text>
        <dbReference type="Rhea" id="RHEA:13065"/>
        <dbReference type="ChEBI" id="CHEBI:15377"/>
        <dbReference type="ChEBI" id="CHEBI:15378"/>
        <dbReference type="ChEBI" id="CHEBI:30616"/>
        <dbReference type="ChEBI" id="CHEBI:43474"/>
        <dbReference type="ChEBI" id="CHEBI:456216"/>
    </reaction>
</comment>
<comment type="subunit">
    <text evidence="1">Homohexamer. Forms an RuvA(8)-RuvB(12)-Holliday junction (HJ) complex. HJ DNA is sandwiched between 2 RuvA tetramers; dsDNA enters through RuvA and exits via RuvB. An RuvB hexamer assembles on each DNA strand where it exits the tetramer. Each RuvB hexamer is contacted by two RuvA subunits (via domain III) on 2 adjacent RuvB subunits; this complex drives branch migration. In the full resolvosome a probable DNA-RuvA(4)-RuvB(12)-RuvC(2) complex forms which resolves the HJ.</text>
</comment>
<comment type="subcellular location">
    <subcellularLocation>
        <location evidence="1">Cytoplasm</location>
    </subcellularLocation>
</comment>
<comment type="domain">
    <text evidence="1">Has 3 domains, the large (RuvB-L) and small ATPase (RuvB-S) domains and the C-terminal head (RuvB-H) domain. The head domain binds DNA, while the ATPase domains jointly bind ATP, ADP or are empty depending on the state of the subunit in the translocation cycle. During a single DNA translocation step the structure of each domain remains the same, but their relative positions change.</text>
</comment>
<comment type="similarity">
    <text evidence="1">Belongs to the RuvB family.</text>
</comment>
<proteinExistence type="inferred from homology"/>
<evidence type="ECO:0000255" key="1">
    <source>
        <dbReference type="HAMAP-Rule" id="MF_00016"/>
    </source>
</evidence>
<sequence length="342" mass="38396">MTNILSPEKSENDQELPIRPSYLQEFVGQQQIKENLSVFIKAAKSRNEHLDHTLFYGPPGLGKTTLAKIISNEIGGNFKSTSGPAILKVADLAAILTNLEKNDVLFIDEIHRLNTAVEEVLYPAMEDFELDIIIGEGSAARSVKITLPKFTLIGATTRLGLLSNPLRDRFGIPMRLNFYNTEELKKVLNRASKLLDIDLTDSGSEEIAKRSRGTPRIALRLLRRIRDFAAVDGKSRVDKEISDFGLKRLEVDRIGLDSNDYRYLKFIADNYNGGPVGIETIAAALSEQRDALEETIEPYLIQIGLLQRTPRGRVITIAAFEHLKMPVPNQSHHQFNIFNENE</sequence>
<protein>
    <recommendedName>
        <fullName evidence="1">Holliday junction branch migration complex subunit RuvB</fullName>
        <ecNumber evidence="1">3.6.4.-</ecNumber>
    </recommendedName>
</protein>
<dbReference type="EC" id="3.6.4.-" evidence="1"/>
<dbReference type="EMBL" id="CP001227">
    <property type="protein sequence ID" value="ACR47731.1"/>
    <property type="molecule type" value="Genomic_DNA"/>
</dbReference>
<dbReference type="RefSeq" id="WP_012736920.1">
    <property type="nucleotide sequence ID" value="NC_012730.1"/>
</dbReference>
<dbReference type="SMR" id="C4K2D4"/>
<dbReference type="KEGG" id="rpk:RPR_05865"/>
<dbReference type="HOGENOM" id="CLU_055599_1_0_5"/>
<dbReference type="Proteomes" id="UP000005015">
    <property type="component" value="Chromosome"/>
</dbReference>
<dbReference type="GO" id="GO:0005737">
    <property type="term" value="C:cytoplasm"/>
    <property type="evidence" value="ECO:0007669"/>
    <property type="project" value="UniProtKB-SubCell"/>
</dbReference>
<dbReference type="GO" id="GO:0048476">
    <property type="term" value="C:Holliday junction resolvase complex"/>
    <property type="evidence" value="ECO:0007669"/>
    <property type="project" value="UniProtKB-UniRule"/>
</dbReference>
<dbReference type="GO" id="GO:0005524">
    <property type="term" value="F:ATP binding"/>
    <property type="evidence" value="ECO:0007669"/>
    <property type="project" value="UniProtKB-UniRule"/>
</dbReference>
<dbReference type="GO" id="GO:0016887">
    <property type="term" value="F:ATP hydrolysis activity"/>
    <property type="evidence" value="ECO:0007669"/>
    <property type="project" value="InterPro"/>
</dbReference>
<dbReference type="GO" id="GO:0000400">
    <property type="term" value="F:four-way junction DNA binding"/>
    <property type="evidence" value="ECO:0007669"/>
    <property type="project" value="UniProtKB-UniRule"/>
</dbReference>
<dbReference type="GO" id="GO:0009378">
    <property type="term" value="F:four-way junction helicase activity"/>
    <property type="evidence" value="ECO:0007669"/>
    <property type="project" value="InterPro"/>
</dbReference>
<dbReference type="GO" id="GO:0006310">
    <property type="term" value="P:DNA recombination"/>
    <property type="evidence" value="ECO:0007669"/>
    <property type="project" value="UniProtKB-UniRule"/>
</dbReference>
<dbReference type="GO" id="GO:0006281">
    <property type="term" value="P:DNA repair"/>
    <property type="evidence" value="ECO:0007669"/>
    <property type="project" value="UniProtKB-UniRule"/>
</dbReference>
<dbReference type="CDD" id="cd00009">
    <property type="entry name" value="AAA"/>
    <property type="match status" value="1"/>
</dbReference>
<dbReference type="Gene3D" id="1.10.8.60">
    <property type="match status" value="1"/>
</dbReference>
<dbReference type="Gene3D" id="3.40.50.300">
    <property type="entry name" value="P-loop containing nucleotide triphosphate hydrolases"/>
    <property type="match status" value="1"/>
</dbReference>
<dbReference type="Gene3D" id="1.10.10.10">
    <property type="entry name" value="Winged helix-like DNA-binding domain superfamily/Winged helix DNA-binding domain"/>
    <property type="match status" value="1"/>
</dbReference>
<dbReference type="HAMAP" id="MF_00016">
    <property type="entry name" value="DNA_HJ_migration_RuvB"/>
    <property type="match status" value="1"/>
</dbReference>
<dbReference type="InterPro" id="IPR003593">
    <property type="entry name" value="AAA+_ATPase"/>
</dbReference>
<dbReference type="InterPro" id="IPR041445">
    <property type="entry name" value="AAA_lid_4"/>
</dbReference>
<dbReference type="InterPro" id="IPR004605">
    <property type="entry name" value="DNA_helicase_Holl-junc_RuvB"/>
</dbReference>
<dbReference type="InterPro" id="IPR027417">
    <property type="entry name" value="P-loop_NTPase"/>
</dbReference>
<dbReference type="InterPro" id="IPR008824">
    <property type="entry name" value="RuvB-like_N"/>
</dbReference>
<dbReference type="InterPro" id="IPR008823">
    <property type="entry name" value="RuvB_C"/>
</dbReference>
<dbReference type="InterPro" id="IPR036388">
    <property type="entry name" value="WH-like_DNA-bd_sf"/>
</dbReference>
<dbReference type="InterPro" id="IPR036390">
    <property type="entry name" value="WH_DNA-bd_sf"/>
</dbReference>
<dbReference type="NCBIfam" id="NF000868">
    <property type="entry name" value="PRK00080.1"/>
    <property type="match status" value="1"/>
</dbReference>
<dbReference type="NCBIfam" id="TIGR00635">
    <property type="entry name" value="ruvB"/>
    <property type="match status" value="1"/>
</dbReference>
<dbReference type="PANTHER" id="PTHR42848">
    <property type="match status" value="1"/>
</dbReference>
<dbReference type="PANTHER" id="PTHR42848:SF1">
    <property type="entry name" value="HOLLIDAY JUNCTION BRANCH MIGRATION COMPLEX SUBUNIT RUVB"/>
    <property type="match status" value="1"/>
</dbReference>
<dbReference type="Pfam" id="PF17864">
    <property type="entry name" value="AAA_lid_4"/>
    <property type="match status" value="1"/>
</dbReference>
<dbReference type="Pfam" id="PF05491">
    <property type="entry name" value="RuvB_C"/>
    <property type="match status" value="1"/>
</dbReference>
<dbReference type="Pfam" id="PF05496">
    <property type="entry name" value="RuvB_N"/>
    <property type="match status" value="1"/>
</dbReference>
<dbReference type="SMART" id="SM00382">
    <property type="entry name" value="AAA"/>
    <property type="match status" value="1"/>
</dbReference>
<dbReference type="SUPFAM" id="SSF52540">
    <property type="entry name" value="P-loop containing nucleoside triphosphate hydrolases"/>
    <property type="match status" value="1"/>
</dbReference>
<dbReference type="SUPFAM" id="SSF46785">
    <property type="entry name" value="Winged helix' DNA-binding domain"/>
    <property type="match status" value="1"/>
</dbReference>
<accession>C4K2D4</accession>
<gene>
    <name evidence="1" type="primary">ruvB</name>
    <name type="ordered locus">RPR_05865</name>
</gene>
<name>RUVB_RICPU</name>
<keyword id="KW-0067">ATP-binding</keyword>
<keyword id="KW-0963">Cytoplasm</keyword>
<keyword id="KW-0227">DNA damage</keyword>
<keyword id="KW-0233">DNA recombination</keyword>
<keyword id="KW-0234">DNA repair</keyword>
<keyword id="KW-0238">DNA-binding</keyword>
<keyword id="KW-0378">Hydrolase</keyword>
<keyword id="KW-0547">Nucleotide-binding</keyword>
<organism>
    <name type="scientific">Rickettsia peacockii (strain Rustic)</name>
    <dbReference type="NCBI Taxonomy" id="562019"/>
    <lineage>
        <taxon>Bacteria</taxon>
        <taxon>Pseudomonadati</taxon>
        <taxon>Pseudomonadota</taxon>
        <taxon>Alphaproteobacteria</taxon>
        <taxon>Rickettsiales</taxon>
        <taxon>Rickettsiaceae</taxon>
        <taxon>Rickettsieae</taxon>
        <taxon>Rickettsia</taxon>
        <taxon>spotted fever group</taxon>
    </lineage>
</organism>
<reference key="1">
    <citation type="journal article" date="2009" name="PLoS ONE">
        <title>Genome sequence of the endosymbiont Rickettsia peacockii and comparison with virulent Rickettsia rickettsii: identification of virulence factors.</title>
        <authorList>
            <person name="Felsheim R.F."/>
            <person name="Kurtti T.J."/>
            <person name="Munderloh U.G."/>
        </authorList>
    </citation>
    <scope>NUCLEOTIDE SEQUENCE [LARGE SCALE GENOMIC DNA]</scope>
    <source>
        <strain>Rustic</strain>
    </source>
</reference>